<organism>
    <name type="scientific">Fervidobacterium nodosum (strain ATCC 35602 / DSM 5306 / Rt17-B1)</name>
    <dbReference type="NCBI Taxonomy" id="381764"/>
    <lineage>
        <taxon>Bacteria</taxon>
        <taxon>Thermotogati</taxon>
        <taxon>Thermotogota</taxon>
        <taxon>Thermotogae</taxon>
        <taxon>Thermotogales</taxon>
        <taxon>Fervidobacteriaceae</taxon>
        <taxon>Fervidobacterium</taxon>
    </lineage>
</organism>
<protein>
    <recommendedName>
        <fullName evidence="1">Histidine--tRNA ligase</fullName>
        <ecNumber evidence="1">6.1.1.21</ecNumber>
    </recommendedName>
    <alternativeName>
        <fullName evidence="1">Histidyl-tRNA synthetase</fullName>
        <shortName evidence="1">HisRS</shortName>
    </alternativeName>
</protein>
<evidence type="ECO:0000255" key="1">
    <source>
        <dbReference type="HAMAP-Rule" id="MF_00127"/>
    </source>
</evidence>
<sequence>MYQKIKGTEDLYGDEMKYWYWIEKKAKDLAIRYGYGEIRTPIFEETKLFIRSVGQDTDIVQKEMYTFEDKGGRSITLRPEGTAPVVRAFVEDGMIAQGFPQKYFYIGPMFRYERPQSGRQRQFHQFGAEIFGSSSAIADAELIIFADRLMKEIGLVDYQIHINSLGDIEDRVKYREALKEYYAQHLENLCDDCKVRYEKNVLRLLDCKVDIEYTKNAPKITDYLGENSRKHYEELKALLDSVGIKYIENPRLVRGLDYYNRTVFEIHHQKLGAMSAIAGGGRYDGLIKEIGGKDVPALGFATGIERLILALKAENVLVDEIETNVVYIAYLGGFDVKAEAIRLSEELRREGIPVGLELMERGLSAQLKNAARVGAKFTIIVGESELERNIVLVKNMETGEQLEFERSFVVSGIKDMITEMQ</sequence>
<keyword id="KW-0030">Aminoacyl-tRNA synthetase</keyword>
<keyword id="KW-0067">ATP-binding</keyword>
<keyword id="KW-0963">Cytoplasm</keyword>
<keyword id="KW-0436">Ligase</keyword>
<keyword id="KW-0547">Nucleotide-binding</keyword>
<keyword id="KW-0648">Protein biosynthesis</keyword>
<keyword id="KW-1185">Reference proteome</keyword>
<gene>
    <name evidence="1" type="primary">hisS</name>
    <name type="ordered locus">Fnod_1453</name>
</gene>
<name>SYH_FERNB</name>
<accession>A7HN13</accession>
<comment type="catalytic activity">
    <reaction evidence="1">
        <text>tRNA(His) + L-histidine + ATP = L-histidyl-tRNA(His) + AMP + diphosphate + H(+)</text>
        <dbReference type="Rhea" id="RHEA:17313"/>
        <dbReference type="Rhea" id="RHEA-COMP:9665"/>
        <dbReference type="Rhea" id="RHEA-COMP:9689"/>
        <dbReference type="ChEBI" id="CHEBI:15378"/>
        <dbReference type="ChEBI" id="CHEBI:30616"/>
        <dbReference type="ChEBI" id="CHEBI:33019"/>
        <dbReference type="ChEBI" id="CHEBI:57595"/>
        <dbReference type="ChEBI" id="CHEBI:78442"/>
        <dbReference type="ChEBI" id="CHEBI:78527"/>
        <dbReference type="ChEBI" id="CHEBI:456215"/>
        <dbReference type="EC" id="6.1.1.21"/>
    </reaction>
</comment>
<comment type="subunit">
    <text evidence="1">Homodimer.</text>
</comment>
<comment type="subcellular location">
    <subcellularLocation>
        <location evidence="1">Cytoplasm</location>
    </subcellularLocation>
</comment>
<comment type="similarity">
    <text evidence="1">Belongs to the class-II aminoacyl-tRNA synthetase family.</text>
</comment>
<reference key="1">
    <citation type="submission" date="2007-07" db="EMBL/GenBank/DDBJ databases">
        <title>Complete sequence of Fervidobacterium nodosum Rt17-B1.</title>
        <authorList>
            <consortium name="US DOE Joint Genome Institute"/>
            <person name="Copeland A."/>
            <person name="Lucas S."/>
            <person name="Lapidus A."/>
            <person name="Barry K."/>
            <person name="Glavina del Rio T."/>
            <person name="Dalin E."/>
            <person name="Tice H."/>
            <person name="Pitluck S."/>
            <person name="Saunders E."/>
            <person name="Brettin T."/>
            <person name="Bruce D."/>
            <person name="Detter J.C."/>
            <person name="Han C."/>
            <person name="Schmutz J."/>
            <person name="Larimer F."/>
            <person name="Land M."/>
            <person name="Hauser L."/>
            <person name="Kyrpides N."/>
            <person name="Mikhailova N."/>
            <person name="Nelson K."/>
            <person name="Gogarten J.P."/>
            <person name="Noll K."/>
            <person name="Richardson P."/>
        </authorList>
    </citation>
    <scope>NUCLEOTIDE SEQUENCE [LARGE SCALE GENOMIC DNA]</scope>
    <source>
        <strain>ATCC 35602 / DSM 5306 / Rt17-B1</strain>
    </source>
</reference>
<proteinExistence type="inferred from homology"/>
<feature type="chain" id="PRO_1000071403" description="Histidine--tRNA ligase">
    <location>
        <begin position="1"/>
        <end position="421"/>
    </location>
</feature>
<dbReference type="EC" id="6.1.1.21" evidence="1"/>
<dbReference type="EMBL" id="CP000771">
    <property type="protein sequence ID" value="ABS61296.1"/>
    <property type="molecule type" value="Genomic_DNA"/>
</dbReference>
<dbReference type="RefSeq" id="WP_011994601.1">
    <property type="nucleotide sequence ID" value="NC_009718.1"/>
</dbReference>
<dbReference type="SMR" id="A7HN13"/>
<dbReference type="STRING" id="381764.Fnod_1453"/>
<dbReference type="KEGG" id="fno:Fnod_1453"/>
<dbReference type="eggNOG" id="COG0124">
    <property type="taxonomic scope" value="Bacteria"/>
</dbReference>
<dbReference type="HOGENOM" id="CLU_025113_1_1_0"/>
<dbReference type="OrthoDB" id="9800814at2"/>
<dbReference type="Proteomes" id="UP000002415">
    <property type="component" value="Chromosome"/>
</dbReference>
<dbReference type="GO" id="GO:0005737">
    <property type="term" value="C:cytoplasm"/>
    <property type="evidence" value="ECO:0007669"/>
    <property type="project" value="UniProtKB-SubCell"/>
</dbReference>
<dbReference type="GO" id="GO:0005524">
    <property type="term" value="F:ATP binding"/>
    <property type="evidence" value="ECO:0007669"/>
    <property type="project" value="UniProtKB-UniRule"/>
</dbReference>
<dbReference type="GO" id="GO:0004821">
    <property type="term" value="F:histidine-tRNA ligase activity"/>
    <property type="evidence" value="ECO:0007669"/>
    <property type="project" value="UniProtKB-UniRule"/>
</dbReference>
<dbReference type="GO" id="GO:0006427">
    <property type="term" value="P:histidyl-tRNA aminoacylation"/>
    <property type="evidence" value="ECO:0007669"/>
    <property type="project" value="UniProtKB-UniRule"/>
</dbReference>
<dbReference type="CDD" id="cd00773">
    <property type="entry name" value="HisRS-like_core"/>
    <property type="match status" value="1"/>
</dbReference>
<dbReference type="CDD" id="cd00859">
    <property type="entry name" value="HisRS_anticodon"/>
    <property type="match status" value="1"/>
</dbReference>
<dbReference type="FunFam" id="3.30.930.10:FF:000005">
    <property type="entry name" value="Histidine--tRNA ligase"/>
    <property type="match status" value="1"/>
</dbReference>
<dbReference type="Gene3D" id="3.40.50.800">
    <property type="entry name" value="Anticodon-binding domain"/>
    <property type="match status" value="1"/>
</dbReference>
<dbReference type="Gene3D" id="3.30.930.10">
    <property type="entry name" value="Bira Bifunctional Protein, Domain 2"/>
    <property type="match status" value="1"/>
</dbReference>
<dbReference type="HAMAP" id="MF_00127">
    <property type="entry name" value="His_tRNA_synth"/>
    <property type="match status" value="1"/>
</dbReference>
<dbReference type="InterPro" id="IPR006195">
    <property type="entry name" value="aa-tRNA-synth_II"/>
</dbReference>
<dbReference type="InterPro" id="IPR045864">
    <property type="entry name" value="aa-tRNA-synth_II/BPL/LPL"/>
</dbReference>
<dbReference type="InterPro" id="IPR004154">
    <property type="entry name" value="Anticodon-bd"/>
</dbReference>
<dbReference type="InterPro" id="IPR036621">
    <property type="entry name" value="Anticodon-bd_dom_sf"/>
</dbReference>
<dbReference type="InterPro" id="IPR015807">
    <property type="entry name" value="His-tRNA-ligase"/>
</dbReference>
<dbReference type="InterPro" id="IPR041715">
    <property type="entry name" value="HisRS-like_core"/>
</dbReference>
<dbReference type="InterPro" id="IPR004516">
    <property type="entry name" value="HisRS/HisZ"/>
</dbReference>
<dbReference type="InterPro" id="IPR033656">
    <property type="entry name" value="HisRS_anticodon"/>
</dbReference>
<dbReference type="NCBIfam" id="TIGR00442">
    <property type="entry name" value="hisS"/>
    <property type="match status" value="1"/>
</dbReference>
<dbReference type="PANTHER" id="PTHR43707:SF1">
    <property type="entry name" value="HISTIDINE--TRNA LIGASE, MITOCHONDRIAL-RELATED"/>
    <property type="match status" value="1"/>
</dbReference>
<dbReference type="PANTHER" id="PTHR43707">
    <property type="entry name" value="HISTIDYL-TRNA SYNTHETASE"/>
    <property type="match status" value="1"/>
</dbReference>
<dbReference type="Pfam" id="PF03129">
    <property type="entry name" value="HGTP_anticodon"/>
    <property type="match status" value="1"/>
</dbReference>
<dbReference type="Pfam" id="PF13393">
    <property type="entry name" value="tRNA-synt_His"/>
    <property type="match status" value="1"/>
</dbReference>
<dbReference type="PIRSF" id="PIRSF001549">
    <property type="entry name" value="His-tRNA_synth"/>
    <property type="match status" value="1"/>
</dbReference>
<dbReference type="SUPFAM" id="SSF52954">
    <property type="entry name" value="Class II aaRS ABD-related"/>
    <property type="match status" value="1"/>
</dbReference>
<dbReference type="SUPFAM" id="SSF55681">
    <property type="entry name" value="Class II aaRS and biotin synthetases"/>
    <property type="match status" value="1"/>
</dbReference>
<dbReference type="PROSITE" id="PS50862">
    <property type="entry name" value="AA_TRNA_LIGASE_II"/>
    <property type="match status" value="1"/>
</dbReference>